<evidence type="ECO:0000255" key="1">
    <source>
        <dbReference type="HAMAP-Rule" id="MF_00115"/>
    </source>
</evidence>
<organism>
    <name type="scientific">Staphylococcus epidermidis (strain ATCC 12228 / FDA PCI 1200)</name>
    <dbReference type="NCBI Taxonomy" id="176280"/>
    <lineage>
        <taxon>Bacteria</taxon>
        <taxon>Bacillati</taxon>
        <taxon>Bacillota</taxon>
        <taxon>Bacilli</taxon>
        <taxon>Bacillales</taxon>
        <taxon>Staphylococcaceae</taxon>
        <taxon>Staphylococcus</taxon>
    </lineage>
</organism>
<sequence>MLKEFKEFALKGNVLDLAIAVVMGAAFNKIVTSLVQYIIMPLIGKLFGSVNFAEDWSFWGIKYGLFIQSIIDFIIIAFALFIFVKIANTVMKKEEKEEEVEENTVLLTEIRDLLKK</sequence>
<reference key="1">
    <citation type="journal article" date="2003" name="Mol. Microbiol.">
        <title>Genome-based analysis of virulence genes in a non-biofilm-forming Staphylococcus epidermidis strain (ATCC 12228).</title>
        <authorList>
            <person name="Zhang Y.-Q."/>
            <person name="Ren S.-X."/>
            <person name="Li H.-L."/>
            <person name="Wang Y.-X."/>
            <person name="Fu G."/>
            <person name="Yang J."/>
            <person name="Qin Z.-Q."/>
            <person name="Miao Y.-G."/>
            <person name="Wang W.-Y."/>
            <person name="Chen R.-S."/>
            <person name="Shen Y."/>
            <person name="Chen Z."/>
            <person name="Yuan Z.-H."/>
            <person name="Zhao G.-P."/>
            <person name="Qu D."/>
            <person name="Danchin A."/>
            <person name="Wen Y.-M."/>
        </authorList>
    </citation>
    <scope>NUCLEOTIDE SEQUENCE [LARGE SCALE GENOMIC DNA]</scope>
    <source>
        <strain>ATCC 12228 / FDA PCI 1200</strain>
    </source>
</reference>
<protein>
    <recommendedName>
        <fullName evidence="1">Large-conductance mechanosensitive channel</fullName>
    </recommendedName>
</protein>
<name>MSCL_STAES</name>
<dbReference type="EMBL" id="AE015929">
    <property type="protein sequence ID" value="AAO04627.1"/>
    <property type="molecule type" value="Genomic_DNA"/>
</dbReference>
<dbReference type="RefSeq" id="NP_764585.1">
    <property type="nucleotide sequence ID" value="NC_004461.1"/>
</dbReference>
<dbReference type="RefSeq" id="WP_001831237.1">
    <property type="nucleotide sequence ID" value="NZ_WBME01000040.1"/>
</dbReference>
<dbReference type="SMR" id="Q8CPC4"/>
<dbReference type="GeneID" id="50018843"/>
<dbReference type="KEGG" id="sep:SE_1030"/>
<dbReference type="PATRIC" id="fig|176280.10.peg.1005"/>
<dbReference type="eggNOG" id="COG1970">
    <property type="taxonomic scope" value="Bacteria"/>
</dbReference>
<dbReference type="HOGENOM" id="CLU_095787_0_0_9"/>
<dbReference type="OrthoDB" id="9810350at2"/>
<dbReference type="Proteomes" id="UP000001411">
    <property type="component" value="Chromosome"/>
</dbReference>
<dbReference type="GO" id="GO:0005886">
    <property type="term" value="C:plasma membrane"/>
    <property type="evidence" value="ECO:0007669"/>
    <property type="project" value="UniProtKB-SubCell"/>
</dbReference>
<dbReference type="GO" id="GO:0008381">
    <property type="term" value="F:mechanosensitive monoatomic ion channel activity"/>
    <property type="evidence" value="ECO:0007669"/>
    <property type="project" value="UniProtKB-UniRule"/>
</dbReference>
<dbReference type="Gene3D" id="1.10.1200.120">
    <property type="entry name" value="Large-conductance mechanosensitive channel, MscL, domain 1"/>
    <property type="match status" value="1"/>
</dbReference>
<dbReference type="HAMAP" id="MF_00115">
    <property type="entry name" value="MscL"/>
    <property type="match status" value="1"/>
</dbReference>
<dbReference type="InterPro" id="IPR019823">
    <property type="entry name" value="Mechanosensitive_channel_CS"/>
</dbReference>
<dbReference type="InterPro" id="IPR001185">
    <property type="entry name" value="MS_channel"/>
</dbReference>
<dbReference type="InterPro" id="IPR037673">
    <property type="entry name" value="MSC/AndL"/>
</dbReference>
<dbReference type="InterPro" id="IPR036019">
    <property type="entry name" value="MscL_channel"/>
</dbReference>
<dbReference type="NCBIfam" id="TIGR00220">
    <property type="entry name" value="mscL"/>
    <property type="match status" value="1"/>
</dbReference>
<dbReference type="NCBIfam" id="NF010559">
    <property type="entry name" value="PRK13954.1"/>
    <property type="match status" value="1"/>
</dbReference>
<dbReference type="PANTHER" id="PTHR30266:SF2">
    <property type="entry name" value="LARGE-CONDUCTANCE MECHANOSENSITIVE CHANNEL"/>
    <property type="match status" value="1"/>
</dbReference>
<dbReference type="PANTHER" id="PTHR30266">
    <property type="entry name" value="MECHANOSENSITIVE CHANNEL MSCL"/>
    <property type="match status" value="1"/>
</dbReference>
<dbReference type="Pfam" id="PF01741">
    <property type="entry name" value="MscL"/>
    <property type="match status" value="1"/>
</dbReference>
<dbReference type="PRINTS" id="PR01264">
    <property type="entry name" value="MECHCHANNEL"/>
</dbReference>
<dbReference type="SUPFAM" id="SSF81330">
    <property type="entry name" value="Gated mechanosensitive channel"/>
    <property type="match status" value="1"/>
</dbReference>
<dbReference type="PROSITE" id="PS01327">
    <property type="entry name" value="MSCL"/>
    <property type="match status" value="1"/>
</dbReference>
<accession>Q8CPC4</accession>
<comment type="function">
    <text evidence="1">Channel that opens in response to stretch forces in the membrane lipid bilayer. May participate in the regulation of osmotic pressure changes within the cell.</text>
</comment>
<comment type="subunit">
    <text evidence="1">Homopentamer.</text>
</comment>
<comment type="subcellular location">
    <subcellularLocation>
        <location evidence="1">Cell membrane</location>
        <topology evidence="1">Multi-pass membrane protein</topology>
    </subcellularLocation>
</comment>
<comment type="similarity">
    <text evidence="1">Belongs to the MscL family.</text>
</comment>
<gene>
    <name evidence="1" type="primary">mscL</name>
    <name type="ordered locus">SE_1030</name>
</gene>
<proteinExistence type="inferred from homology"/>
<feature type="chain" id="PRO_0000192467" description="Large-conductance mechanosensitive channel">
    <location>
        <begin position="1"/>
        <end position="116"/>
    </location>
</feature>
<feature type="transmembrane region" description="Helical" evidence="1">
    <location>
        <begin position="7"/>
        <end position="27"/>
    </location>
</feature>
<feature type="transmembrane region" description="Helical" evidence="1">
    <location>
        <begin position="64"/>
        <end position="84"/>
    </location>
</feature>
<keyword id="KW-1003">Cell membrane</keyword>
<keyword id="KW-0407">Ion channel</keyword>
<keyword id="KW-0406">Ion transport</keyword>
<keyword id="KW-0472">Membrane</keyword>
<keyword id="KW-0812">Transmembrane</keyword>
<keyword id="KW-1133">Transmembrane helix</keyword>
<keyword id="KW-0813">Transport</keyword>